<keyword id="KW-0255">Endonuclease</keyword>
<keyword id="KW-0269">Exonuclease</keyword>
<keyword id="KW-0378">Hydrolase</keyword>
<keyword id="KW-0479">Metal-binding</keyword>
<keyword id="KW-0540">Nuclease</keyword>
<keyword id="KW-0819">tRNA processing</keyword>
<keyword id="KW-0862">Zinc</keyword>
<proteinExistence type="inferred from homology"/>
<sequence length="305" mass="32877">MELIFLGTSAGVPTRSRNVTAILLHLQHPTQPGVWLFDCGEGTQHQMLNTAFHPGKLERIFISHLHGDHLFGLPGLLCSRSMAGNPHPLTVYGPQGVREFIATTLRLSGSWTDFPLQIEEISAGDILDDGLRKVTAFRLEHPLECYGYRVVEHDKPGALNARALKAAGVTPGPLFQALKAGKTVTLADGRQINGADYLAPAVAGKSVAIFGDTAPCEAALALAQGVDVMVHETTLDASMEEKANARGHSSTRQTATLAREAAVGRLIMTHISSRYDDKGCQRLLAECRAIFPATELAYDFSVFPV</sequence>
<organism>
    <name type="scientific">Salmonella dublin (strain CT_02021853)</name>
    <dbReference type="NCBI Taxonomy" id="439851"/>
    <lineage>
        <taxon>Bacteria</taxon>
        <taxon>Pseudomonadati</taxon>
        <taxon>Pseudomonadota</taxon>
        <taxon>Gammaproteobacteria</taxon>
        <taxon>Enterobacterales</taxon>
        <taxon>Enterobacteriaceae</taxon>
        <taxon>Salmonella</taxon>
    </lineage>
</organism>
<gene>
    <name evidence="1" type="primary">rbn</name>
    <name type="synonym">rnz</name>
    <name type="ordered locus">SeD_A2657</name>
</gene>
<evidence type="ECO:0000255" key="1">
    <source>
        <dbReference type="HAMAP-Rule" id="MF_01818"/>
    </source>
</evidence>
<dbReference type="EC" id="3.1.-.-" evidence="1"/>
<dbReference type="EMBL" id="CP001144">
    <property type="protein sequence ID" value="ACH76143.1"/>
    <property type="molecule type" value="Genomic_DNA"/>
</dbReference>
<dbReference type="RefSeq" id="WP_000419093.1">
    <property type="nucleotide sequence ID" value="NC_011205.1"/>
</dbReference>
<dbReference type="SMR" id="B5FPF2"/>
<dbReference type="KEGG" id="sed:SeD_A2657"/>
<dbReference type="HOGENOM" id="CLU_031317_2_0_6"/>
<dbReference type="Proteomes" id="UP000008322">
    <property type="component" value="Chromosome"/>
</dbReference>
<dbReference type="GO" id="GO:0042781">
    <property type="term" value="F:3'-tRNA processing endoribonuclease activity"/>
    <property type="evidence" value="ECO:0007669"/>
    <property type="project" value="TreeGrafter"/>
</dbReference>
<dbReference type="GO" id="GO:0004527">
    <property type="term" value="F:exonuclease activity"/>
    <property type="evidence" value="ECO:0007669"/>
    <property type="project" value="UniProtKB-UniRule"/>
</dbReference>
<dbReference type="GO" id="GO:0008270">
    <property type="term" value="F:zinc ion binding"/>
    <property type="evidence" value="ECO:0007669"/>
    <property type="project" value="UniProtKB-UniRule"/>
</dbReference>
<dbReference type="CDD" id="cd07717">
    <property type="entry name" value="RNaseZ_ZiPD-like_MBL-fold"/>
    <property type="match status" value="1"/>
</dbReference>
<dbReference type="FunFam" id="3.60.15.10:FF:000002">
    <property type="entry name" value="Ribonuclease Z"/>
    <property type="match status" value="1"/>
</dbReference>
<dbReference type="Gene3D" id="3.60.15.10">
    <property type="entry name" value="Ribonuclease Z/Hydroxyacylglutathione hydrolase-like"/>
    <property type="match status" value="1"/>
</dbReference>
<dbReference type="HAMAP" id="MF_01818">
    <property type="entry name" value="RNase_Z_BN"/>
    <property type="match status" value="1"/>
</dbReference>
<dbReference type="InterPro" id="IPR001279">
    <property type="entry name" value="Metallo-B-lactamas"/>
</dbReference>
<dbReference type="InterPro" id="IPR036866">
    <property type="entry name" value="RibonucZ/Hydroxyglut_hydro"/>
</dbReference>
<dbReference type="InterPro" id="IPR013469">
    <property type="entry name" value="Rnase_BN"/>
</dbReference>
<dbReference type="InterPro" id="IPR013471">
    <property type="entry name" value="RNase_Z/BN"/>
</dbReference>
<dbReference type="NCBIfam" id="NF000800">
    <property type="entry name" value="PRK00055.1-1"/>
    <property type="match status" value="1"/>
</dbReference>
<dbReference type="NCBIfam" id="NF000801">
    <property type="entry name" value="PRK00055.1-3"/>
    <property type="match status" value="1"/>
</dbReference>
<dbReference type="NCBIfam" id="TIGR02651">
    <property type="entry name" value="RNase_Z"/>
    <property type="match status" value="1"/>
</dbReference>
<dbReference type="NCBIfam" id="TIGR02649">
    <property type="entry name" value="true_RNase_BN"/>
    <property type="match status" value="1"/>
</dbReference>
<dbReference type="PANTHER" id="PTHR46018">
    <property type="entry name" value="ZINC PHOSPHODIESTERASE ELAC PROTEIN 1"/>
    <property type="match status" value="1"/>
</dbReference>
<dbReference type="PANTHER" id="PTHR46018:SF2">
    <property type="entry name" value="ZINC PHOSPHODIESTERASE ELAC PROTEIN 1"/>
    <property type="match status" value="1"/>
</dbReference>
<dbReference type="Pfam" id="PF12706">
    <property type="entry name" value="Lactamase_B_2"/>
    <property type="match status" value="2"/>
</dbReference>
<dbReference type="SUPFAM" id="SSF56281">
    <property type="entry name" value="Metallo-hydrolase/oxidoreductase"/>
    <property type="match status" value="1"/>
</dbReference>
<feature type="chain" id="PRO_1000187981" description="Ribonuclease BN">
    <location>
        <begin position="1"/>
        <end position="305"/>
    </location>
</feature>
<feature type="active site" description="Proton acceptor" evidence="1">
    <location>
        <position position="68"/>
    </location>
</feature>
<feature type="binding site" evidence="1">
    <location>
        <position position="64"/>
    </location>
    <ligand>
        <name>Zn(2+)</name>
        <dbReference type="ChEBI" id="CHEBI:29105"/>
        <label>1</label>
        <note>catalytic</note>
    </ligand>
</feature>
<feature type="binding site" evidence="1">
    <location>
        <position position="66"/>
    </location>
    <ligand>
        <name>Zn(2+)</name>
        <dbReference type="ChEBI" id="CHEBI:29105"/>
        <label>1</label>
        <note>catalytic</note>
    </ligand>
</feature>
<feature type="binding site" evidence="1">
    <location>
        <position position="68"/>
    </location>
    <ligand>
        <name>Zn(2+)</name>
        <dbReference type="ChEBI" id="CHEBI:29105"/>
        <label>2</label>
        <note>catalytic</note>
    </ligand>
</feature>
<feature type="binding site" evidence="1">
    <location>
        <position position="69"/>
    </location>
    <ligand>
        <name>Zn(2+)</name>
        <dbReference type="ChEBI" id="CHEBI:29105"/>
        <label>2</label>
        <note>catalytic</note>
    </ligand>
</feature>
<feature type="binding site" evidence="1">
    <location>
        <position position="141"/>
    </location>
    <ligand>
        <name>Zn(2+)</name>
        <dbReference type="ChEBI" id="CHEBI:29105"/>
        <label>1</label>
        <note>catalytic</note>
    </ligand>
</feature>
<feature type="binding site" evidence="1">
    <location>
        <position position="212"/>
    </location>
    <ligand>
        <name>Zn(2+)</name>
        <dbReference type="ChEBI" id="CHEBI:29105"/>
        <label>1</label>
        <note>catalytic</note>
    </ligand>
</feature>
<feature type="binding site" evidence="1">
    <location>
        <position position="212"/>
    </location>
    <ligand>
        <name>Zn(2+)</name>
        <dbReference type="ChEBI" id="CHEBI:29105"/>
        <label>2</label>
        <note>catalytic</note>
    </ligand>
</feature>
<feature type="binding site" evidence="1">
    <location>
        <position position="270"/>
    </location>
    <ligand>
        <name>Zn(2+)</name>
        <dbReference type="ChEBI" id="CHEBI:29105"/>
        <label>2</label>
        <note>catalytic</note>
    </ligand>
</feature>
<accession>B5FPF2</accession>
<reference key="1">
    <citation type="journal article" date="2011" name="J. Bacteriol.">
        <title>Comparative genomics of 28 Salmonella enterica isolates: evidence for CRISPR-mediated adaptive sublineage evolution.</title>
        <authorList>
            <person name="Fricke W.F."/>
            <person name="Mammel M.K."/>
            <person name="McDermott P.F."/>
            <person name="Tartera C."/>
            <person name="White D.G."/>
            <person name="Leclerc J.E."/>
            <person name="Ravel J."/>
            <person name="Cebula T.A."/>
        </authorList>
    </citation>
    <scope>NUCLEOTIDE SEQUENCE [LARGE SCALE GENOMIC DNA]</scope>
    <source>
        <strain>CT_02021853</strain>
    </source>
</reference>
<name>RBN_SALDC</name>
<protein>
    <recommendedName>
        <fullName evidence="1">Ribonuclease BN</fullName>
        <shortName evidence="1">RNase BN</shortName>
        <ecNumber evidence="1">3.1.-.-</ecNumber>
    </recommendedName>
    <alternativeName>
        <fullName evidence="1">Ribonuclease Z homolog</fullName>
        <shortName evidence="1">RNase Z homolog</shortName>
    </alternativeName>
</protein>
<comment type="function">
    <text evidence="1">Zinc phosphodiesterase, which has both exoribonuclease and endoribonuclease activities.</text>
</comment>
<comment type="cofactor">
    <cofactor evidence="1">
        <name>Zn(2+)</name>
        <dbReference type="ChEBI" id="CHEBI:29105"/>
    </cofactor>
    <text evidence="1">Binds 2 Zn(2+) ions.</text>
</comment>
<comment type="subunit">
    <text evidence="1">Homodimer.</text>
</comment>
<comment type="similarity">
    <text evidence="1">Belongs to the RNase Z family. RNase BN subfamily.</text>
</comment>